<sequence>MPLTWKDSGLRWYWVVVLVFLADQLSKQWVLANFDLFESVKLLPFFNFTYVRNYGAAFSFLSEAGGWQRWLFTLVAVGFSTLLTVWLRKQSASLWKLNLAYTLVIGGALGNLIDRLMHGFVVDFIDFYWGKSHYPAFNIADSAIFIGAVLIIWDSFFNSKSEQDKTEEVK</sequence>
<proteinExistence type="inferred from homology"/>
<comment type="function">
    <text evidence="1">This protein specifically catalyzes the removal of signal peptides from prolipoproteins.</text>
</comment>
<comment type="catalytic activity">
    <reaction evidence="1">
        <text>Release of signal peptides from bacterial membrane prolipoproteins. Hydrolyzes -Xaa-Yaa-Zaa-|-(S,diacylglyceryl)Cys-, in which Xaa is hydrophobic (preferably Leu), and Yaa (Ala or Ser) and Zaa (Gly or Ala) have small, neutral side chains.</text>
        <dbReference type="EC" id="3.4.23.36"/>
    </reaction>
</comment>
<comment type="pathway">
    <text evidence="1">Protein modification; lipoprotein biosynthesis (signal peptide cleavage).</text>
</comment>
<comment type="subcellular location">
    <subcellularLocation>
        <location evidence="1">Cell inner membrane</location>
        <topology evidence="1">Multi-pass membrane protein</topology>
    </subcellularLocation>
</comment>
<comment type="similarity">
    <text evidence="1">Belongs to the peptidase A8 family.</text>
</comment>
<accession>Q0HS83</accession>
<reference key="1">
    <citation type="submission" date="2006-08" db="EMBL/GenBank/DDBJ databases">
        <title>Complete sequence of chromosome 1 of Shewanella sp. MR-7.</title>
        <authorList>
            <person name="Copeland A."/>
            <person name="Lucas S."/>
            <person name="Lapidus A."/>
            <person name="Barry K."/>
            <person name="Detter J.C."/>
            <person name="Glavina del Rio T."/>
            <person name="Hammon N."/>
            <person name="Israni S."/>
            <person name="Dalin E."/>
            <person name="Tice H."/>
            <person name="Pitluck S."/>
            <person name="Kiss H."/>
            <person name="Brettin T."/>
            <person name="Bruce D."/>
            <person name="Han C."/>
            <person name="Tapia R."/>
            <person name="Gilna P."/>
            <person name="Schmutz J."/>
            <person name="Larimer F."/>
            <person name="Land M."/>
            <person name="Hauser L."/>
            <person name="Kyrpides N."/>
            <person name="Mikhailova N."/>
            <person name="Nealson K."/>
            <person name="Konstantinidis K."/>
            <person name="Klappenbach J."/>
            <person name="Tiedje J."/>
            <person name="Richardson P."/>
        </authorList>
    </citation>
    <scope>NUCLEOTIDE SEQUENCE [LARGE SCALE GENOMIC DNA]</scope>
    <source>
        <strain>MR-7</strain>
    </source>
</reference>
<dbReference type="EC" id="3.4.23.36" evidence="1"/>
<dbReference type="EMBL" id="CP000444">
    <property type="protein sequence ID" value="ABI44022.1"/>
    <property type="molecule type" value="Genomic_DNA"/>
</dbReference>
<dbReference type="SMR" id="Q0HS83"/>
<dbReference type="MEROPS" id="A08.001"/>
<dbReference type="KEGG" id="shm:Shewmr7_3038"/>
<dbReference type="HOGENOM" id="CLU_083252_4_0_6"/>
<dbReference type="UniPathway" id="UPA00665"/>
<dbReference type="GO" id="GO:0005886">
    <property type="term" value="C:plasma membrane"/>
    <property type="evidence" value="ECO:0007669"/>
    <property type="project" value="UniProtKB-SubCell"/>
</dbReference>
<dbReference type="GO" id="GO:0004190">
    <property type="term" value="F:aspartic-type endopeptidase activity"/>
    <property type="evidence" value="ECO:0007669"/>
    <property type="project" value="UniProtKB-UniRule"/>
</dbReference>
<dbReference type="GO" id="GO:0006508">
    <property type="term" value="P:proteolysis"/>
    <property type="evidence" value="ECO:0007669"/>
    <property type="project" value="UniProtKB-KW"/>
</dbReference>
<dbReference type="HAMAP" id="MF_00161">
    <property type="entry name" value="LspA"/>
    <property type="match status" value="1"/>
</dbReference>
<dbReference type="InterPro" id="IPR001872">
    <property type="entry name" value="Peptidase_A8"/>
</dbReference>
<dbReference type="NCBIfam" id="TIGR00077">
    <property type="entry name" value="lspA"/>
    <property type="match status" value="1"/>
</dbReference>
<dbReference type="PANTHER" id="PTHR33695">
    <property type="entry name" value="LIPOPROTEIN SIGNAL PEPTIDASE"/>
    <property type="match status" value="1"/>
</dbReference>
<dbReference type="PANTHER" id="PTHR33695:SF1">
    <property type="entry name" value="LIPOPROTEIN SIGNAL PEPTIDASE"/>
    <property type="match status" value="1"/>
</dbReference>
<dbReference type="Pfam" id="PF01252">
    <property type="entry name" value="Peptidase_A8"/>
    <property type="match status" value="1"/>
</dbReference>
<dbReference type="PRINTS" id="PR00781">
    <property type="entry name" value="LIPOSIGPTASE"/>
</dbReference>
<dbReference type="PROSITE" id="PS00855">
    <property type="entry name" value="SPASE_II"/>
    <property type="match status" value="1"/>
</dbReference>
<keyword id="KW-0064">Aspartyl protease</keyword>
<keyword id="KW-0997">Cell inner membrane</keyword>
<keyword id="KW-1003">Cell membrane</keyword>
<keyword id="KW-0378">Hydrolase</keyword>
<keyword id="KW-0472">Membrane</keyword>
<keyword id="KW-0645">Protease</keyword>
<keyword id="KW-0812">Transmembrane</keyword>
<keyword id="KW-1133">Transmembrane helix</keyword>
<evidence type="ECO:0000255" key="1">
    <source>
        <dbReference type="HAMAP-Rule" id="MF_00161"/>
    </source>
</evidence>
<name>LSPA_SHESR</name>
<protein>
    <recommendedName>
        <fullName evidence="1">Lipoprotein signal peptidase</fullName>
        <ecNumber evidence="1">3.4.23.36</ecNumber>
    </recommendedName>
    <alternativeName>
        <fullName evidence="1">Prolipoprotein signal peptidase</fullName>
    </alternativeName>
    <alternativeName>
        <fullName evidence="1">Signal peptidase II</fullName>
        <shortName evidence="1">SPase II</shortName>
    </alternativeName>
</protein>
<organism>
    <name type="scientific">Shewanella sp. (strain MR-7)</name>
    <dbReference type="NCBI Taxonomy" id="60481"/>
    <lineage>
        <taxon>Bacteria</taxon>
        <taxon>Pseudomonadati</taxon>
        <taxon>Pseudomonadota</taxon>
        <taxon>Gammaproteobacteria</taxon>
        <taxon>Alteromonadales</taxon>
        <taxon>Shewanellaceae</taxon>
        <taxon>Shewanella</taxon>
    </lineage>
</organism>
<feature type="chain" id="PRO_0000289422" description="Lipoprotein signal peptidase">
    <location>
        <begin position="1"/>
        <end position="170"/>
    </location>
</feature>
<feature type="transmembrane region" description="Helical" evidence="1">
    <location>
        <begin position="12"/>
        <end position="32"/>
    </location>
</feature>
<feature type="transmembrane region" description="Helical" evidence="1">
    <location>
        <begin position="67"/>
        <end position="87"/>
    </location>
</feature>
<feature type="transmembrane region" description="Helical" evidence="1">
    <location>
        <begin position="93"/>
        <end position="113"/>
    </location>
</feature>
<feature type="transmembrane region" description="Helical" evidence="1">
    <location>
        <begin position="137"/>
        <end position="157"/>
    </location>
</feature>
<feature type="active site" evidence="1">
    <location>
        <position position="123"/>
    </location>
</feature>
<feature type="active site" evidence="1">
    <location>
        <position position="141"/>
    </location>
</feature>
<gene>
    <name evidence="1" type="primary">lspA</name>
    <name type="ordered locus">Shewmr7_3038</name>
</gene>